<evidence type="ECO:0000256" key="1">
    <source>
        <dbReference type="SAM" id="MobiDB-lite"/>
    </source>
</evidence>
<evidence type="ECO:0000269" key="2">
    <source>
    </source>
</evidence>
<evidence type="ECO:0000269" key="3">
    <source>
    </source>
</evidence>
<evidence type="ECO:0000269" key="4">
    <source>
    </source>
</evidence>
<evidence type="ECO:0000269" key="5">
    <source>
    </source>
</evidence>
<evidence type="ECO:0000305" key="6"/>
<evidence type="ECO:0007829" key="7">
    <source>
        <dbReference type="PDB" id="2XPI"/>
    </source>
</evidence>
<dbReference type="EMBL" id="D31844">
    <property type="protein sequence ID" value="BAA06630.1"/>
    <property type="molecule type" value="Genomic_DNA"/>
</dbReference>
<dbReference type="EMBL" id="CU329670">
    <property type="protein sequence ID" value="CAB11098.1"/>
    <property type="molecule type" value="Genomic_DNA"/>
</dbReference>
<dbReference type="PIR" id="A55164">
    <property type="entry name" value="A55164"/>
</dbReference>
<dbReference type="RefSeq" id="NP_593301.1">
    <property type="nucleotide sequence ID" value="NM_001018731.2"/>
</dbReference>
<dbReference type="PDB" id="2XPI">
    <property type="method" value="X-ray"/>
    <property type="resolution" value="2.60 A"/>
    <property type="chains" value="A/D=1-597"/>
</dbReference>
<dbReference type="PDBsum" id="2XPI"/>
<dbReference type="SMR" id="P41889"/>
<dbReference type="BioGRID" id="278089">
    <property type="interactions" value="57"/>
</dbReference>
<dbReference type="ComplexPortal" id="CPX-763">
    <property type="entry name" value="Anaphase-promoting complex"/>
</dbReference>
<dbReference type="ComplexPortal" id="CPX-764">
    <property type="entry name" value="Anaphase-promoting complex, slp1 variant"/>
</dbReference>
<dbReference type="ComplexPortal" id="CPX-765">
    <property type="entry name" value="Anaphase-promoting complex, srw1 variant"/>
</dbReference>
<dbReference type="ComplexPortal" id="CPX-766">
    <property type="entry name" value="Anaphase-promoting complex, mfr1 variant"/>
</dbReference>
<dbReference type="FunCoup" id="P41889">
    <property type="interactions" value="977"/>
</dbReference>
<dbReference type="IntAct" id="P41889">
    <property type="interactions" value="6"/>
</dbReference>
<dbReference type="MINT" id="P41889"/>
<dbReference type="STRING" id="284812.P41889"/>
<dbReference type="iPTMnet" id="P41889"/>
<dbReference type="PaxDb" id="4896-SPAC6F12.15c.1"/>
<dbReference type="EnsemblFungi" id="SPAC6F12.15c.1">
    <property type="protein sequence ID" value="SPAC6F12.15c.1:pep"/>
    <property type="gene ID" value="SPAC6F12.15c"/>
</dbReference>
<dbReference type="GeneID" id="2541592"/>
<dbReference type="KEGG" id="spo:2541592"/>
<dbReference type="PomBase" id="SPAC6F12.15c">
    <property type="gene designation" value="cut9"/>
</dbReference>
<dbReference type="VEuPathDB" id="FungiDB:SPAC6F12.15c"/>
<dbReference type="eggNOG" id="KOG1173">
    <property type="taxonomic scope" value="Eukaryota"/>
</dbReference>
<dbReference type="HOGENOM" id="CLU_011751_4_0_1"/>
<dbReference type="InParanoid" id="P41889"/>
<dbReference type="OMA" id="DPFHNNA"/>
<dbReference type="PhylomeDB" id="P41889"/>
<dbReference type="Reactome" id="R-SPO-983168">
    <property type="pathway name" value="Antigen processing: Ubiquitination &amp; Proteasome degradation"/>
</dbReference>
<dbReference type="EvolutionaryTrace" id="P41889"/>
<dbReference type="PRO" id="PR:P41889"/>
<dbReference type="Proteomes" id="UP000002485">
    <property type="component" value="Chromosome I"/>
</dbReference>
<dbReference type="GO" id="GO:0005680">
    <property type="term" value="C:anaphase-promoting complex"/>
    <property type="evidence" value="ECO:0000314"/>
    <property type="project" value="PomBase"/>
</dbReference>
<dbReference type="GO" id="GO:0005737">
    <property type="term" value="C:cytoplasm"/>
    <property type="evidence" value="ECO:0000318"/>
    <property type="project" value="GO_Central"/>
</dbReference>
<dbReference type="GO" id="GO:0005829">
    <property type="term" value="C:cytosol"/>
    <property type="evidence" value="ECO:0007005"/>
    <property type="project" value="PomBase"/>
</dbReference>
<dbReference type="GO" id="GO:0005721">
    <property type="term" value="C:pericentric heterochromatin"/>
    <property type="evidence" value="ECO:0000314"/>
    <property type="project" value="PomBase"/>
</dbReference>
<dbReference type="GO" id="GO:0031145">
    <property type="term" value="P:anaphase-promoting complex-dependent catabolic process"/>
    <property type="evidence" value="ECO:0000315"/>
    <property type="project" value="PomBase"/>
</dbReference>
<dbReference type="GO" id="GO:0051301">
    <property type="term" value="P:cell division"/>
    <property type="evidence" value="ECO:0000318"/>
    <property type="project" value="GO_Central"/>
</dbReference>
<dbReference type="GO" id="GO:0045842">
    <property type="term" value="P:positive regulation of mitotic metaphase/anaphase transition"/>
    <property type="evidence" value="ECO:0000318"/>
    <property type="project" value="GO_Central"/>
</dbReference>
<dbReference type="GO" id="GO:1901970">
    <property type="term" value="P:positive regulation of mitotic sister chromatid separation"/>
    <property type="evidence" value="ECO:0000315"/>
    <property type="project" value="PomBase"/>
</dbReference>
<dbReference type="GO" id="GO:0016567">
    <property type="term" value="P:protein ubiquitination"/>
    <property type="evidence" value="ECO:0000318"/>
    <property type="project" value="GO_Central"/>
</dbReference>
<dbReference type="FunFam" id="1.25.40.10:FF:004033">
    <property type="entry name" value="Anaphase-promoting complex subunit cut9"/>
    <property type="match status" value="1"/>
</dbReference>
<dbReference type="Gene3D" id="1.25.40.10">
    <property type="entry name" value="Tetratricopeptide repeat domain"/>
    <property type="match status" value="1"/>
</dbReference>
<dbReference type="InterPro" id="IPR011990">
    <property type="entry name" value="TPR-like_helical_dom_sf"/>
</dbReference>
<dbReference type="InterPro" id="IPR019734">
    <property type="entry name" value="TPR_rpt"/>
</dbReference>
<dbReference type="PANTHER" id="PTHR12558">
    <property type="entry name" value="CELL DIVISION CYCLE 16,23,27"/>
    <property type="match status" value="1"/>
</dbReference>
<dbReference type="PANTHER" id="PTHR12558:SF9">
    <property type="entry name" value="CELL DIVISION CYCLE PROTEIN 16 HOMOLOG"/>
    <property type="match status" value="1"/>
</dbReference>
<dbReference type="Pfam" id="PF12895">
    <property type="entry name" value="ANAPC3"/>
    <property type="match status" value="1"/>
</dbReference>
<dbReference type="Pfam" id="PF13424">
    <property type="entry name" value="TPR_12"/>
    <property type="match status" value="1"/>
</dbReference>
<dbReference type="Pfam" id="PF13181">
    <property type="entry name" value="TPR_8"/>
    <property type="match status" value="1"/>
</dbReference>
<dbReference type="SMART" id="SM00028">
    <property type="entry name" value="TPR"/>
    <property type="match status" value="8"/>
</dbReference>
<dbReference type="SUPFAM" id="SSF48452">
    <property type="entry name" value="TPR-like"/>
    <property type="match status" value="2"/>
</dbReference>
<dbReference type="PROSITE" id="PS50005">
    <property type="entry name" value="TPR"/>
    <property type="match status" value="6"/>
</dbReference>
<dbReference type="PROSITE" id="PS50293">
    <property type="entry name" value="TPR_REGION"/>
    <property type="match status" value="2"/>
</dbReference>
<organism>
    <name type="scientific">Schizosaccharomyces pombe (strain 972 / ATCC 24843)</name>
    <name type="common">Fission yeast</name>
    <dbReference type="NCBI Taxonomy" id="284812"/>
    <lineage>
        <taxon>Eukaryota</taxon>
        <taxon>Fungi</taxon>
        <taxon>Dikarya</taxon>
        <taxon>Ascomycota</taxon>
        <taxon>Taphrinomycotina</taxon>
        <taxon>Schizosaccharomycetes</taxon>
        <taxon>Schizosaccharomycetales</taxon>
        <taxon>Schizosaccharomycetaceae</taxon>
        <taxon>Schizosaccharomyces</taxon>
    </lineage>
</organism>
<comment type="function">
    <text evidence="5">Component of the anaphase-promoting complex/cyclosome (APC/C), a cell cycle-regulated E3 ubiquitin-protein ligase complex that controls progression through mitosis and the G1 phase of the cell cycle. The APC/C is thought to confer substrate specificity and, in the presence of ubiquitin-conjugating E2 enzymes, it catalyzes the formation of protein-ubiquitin conjugates that are subsequently degraded by the 26S proteasome. May play a pivotal role in the control of anaphase.</text>
</comment>
<comment type="subunit">
    <text evidence="2 3 5">The APC/C is composed of at least 13 subunits: apc1, apc2, nuc2, apc4, apc5, cut9, apc8, apc10, apc11, hcn1, apc13, apc14 and apc15. Homodimer. Interacts directly with nuc2 and hcn1.</text>
</comment>
<comment type="interaction">
    <interactant intactId="EBI-1160859">
        <id>P41889</id>
    </interactant>
    <interactant intactId="EBI-1251592">
        <id>O42659</id>
        <label>apc14</label>
    </interactant>
    <organismsDiffer>false</organismsDiffer>
    <experiments>2</experiments>
</comment>
<comment type="interaction">
    <interactant intactId="EBI-1160859">
        <id>P41889</id>
    </interactant>
    <interactant intactId="EBI-1251604">
        <id>O94688</id>
        <label>apc15</label>
    </interactant>
    <organismsDiffer>false</organismsDiffer>
    <experiments>2</experiments>
</comment>
<comment type="interaction">
    <interactant intactId="EBI-1160859">
        <id>P41889</id>
    </interactant>
    <interactant intactId="EBI-1251563">
        <id>O13916</id>
        <label>hcn1</label>
    </interactant>
    <organismsDiffer>false</organismsDiffer>
    <experiments>2</experiments>
</comment>
<comment type="subcellular location">
    <subcellularLocation>
        <location evidence="6">Nucleus</location>
    </subcellularLocation>
</comment>
<comment type="domain">
    <text evidence="3">TPR repeats 1-7 mediate homodimerization while TPR repeats 8 and 10-13 bind to hcn1, burying its N-terminal acetyl-methionine.</text>
</comment>
<comment type="PTM">
    <text evidence="5">Phosphorylated.</text>
</comment>
<accession>P41889</accession>
<accession>O14231</accession>
<protein>
    <recommendedName>
        <fullName>Anaphase-promoting complex subunit cut9</fullName>
    </recommendedName>
    <alternativeName>
        <fullName>20S cyclosome/APC complex protein cut9</fullName>
    </alternativeName>
    <alternativeName>
        <fullName>Cell untimely torn protein 9</fullName>
    </alternativeName>
</protein>
<gene>
    <name type="primary">cut9</name>
    <name type="synonym">dre1</name>
    <name type="ORF">SPAC6F12.15c</name>
</gene>
<reference key="1">
    <citation type="journal article" date="1994" name="J. Cell Biol.">
        <title>Bypassing anaphase by fission yeast cut9 mutation: requirement of cut9+ to initiate anaphase.</title>
        <authorList>
            <person name="Samejima I."/>
            <person name="Yanagida M."/>
        </authorList>
    </citation>
    <scope>NUCLEOTIDE SEQUENCE [GENOMIC DNA]</scope>
    <scope>MUTAGENESIS OF GLY-412 AND ALA-535</scope>
</reference>
<reference key="2">
    <citation type="journal article" date="2002" name="Nature">
        <title>The genome sequence of Schizosaccharomyces pombe.</title>
        <authorList>
            <person name="Wood V."/>
            <person name="Gwilliam R."/>
            <person name="Rajandream M.A."/>
            <person name="Lyne M.H."/>
            <person name="Lyne R."/>
            <person name="Stewart A."/>
            <person name="Sgouros J.G."/>
            <person name="Peat N."/>
            <person name="Hayles J."/>
            <person name="Baker S.G."/>
            <person name="Basham D."/>
            <person name="Bowman S."/>
            <person name="Brooks K."/>
            <person name="Brown D."/>
            <person name="Brown S."/>
            <person name="Chillingworth T."/>
            <person name="Churcher C.M."/>
            <person name="Collins M."/>
            <person name="Connor R."/>
            <person name="Cronin A."/>
            <person name="Davis P."/>
            <person name="Feltwell T."/>
            <person name="Fraser A."/>
            <person name="Gentles S."/>
            <person name="Goble A."/>
            <person name="Hamlin N."/>
            <person name="Harris D.E."/>
            <person name="Hidalgo J."/>
            <person name="Hodgson G."/>
            <person name="Holroyd S."/>
            <person name="Hornsby T."/>
            <person name="Howarth S."/>
            <person name="Huckle E.J."/>
            <person name="Hunt S."/>
            <person name="Jagels K."/>
            <person name="James K.D."/>
            <person name="Jones L."/>
            <person name="Jones M."/>
            <person name="Leather S."/>
            <person name="McDonald S."/>
            <person name="McLean J."/>
            <person name="Mooney P."/>
            <person name="Moule S."/>
            <person name="Mungall K.L."/>
            <person name="Murphy L.D."/>
            <person name="Niblett D."/>
            <person name="Odell C."/>
            <person name="Oliver K."/>
            <person name="O'Neil S."/>
            <person name="Pearson D."/>
            <person name="Quail M.A."/>
            <person name="Rabbinowitsch E."/>
            <person name="Rutherford K.M."/>
            <person name="Rutter S."/>
            <person name="Saunders D."/>
            <person name="Seeger K."/>
            <person name="Sharp S."/>
            <person name="Skelton J."/>
            <person name="Simmonds M.N."/>
            <person name="Squares R."/>
            <person name="Squares S."/>
            <person name="Stevens K."/>
            <person name="Taylor K."/>
            <person name="Taylor R.G."/>
            <person name="Tivey A."/>
            <person name="Walsh S.V."/>
            <person name="Warren T."/>
            <person name="Whitehead S."/>
            <person name="Woodward J.R."/>
            <person name="Volckaert G."/>
            <person name="Aert R."/>
            <person name="Robben J."/>
            <person name="Grymonprez B."/>
            <person name="Weltjens I."/>
            <person name="Vanstreels E."/>
            <person name="Rieger M."/>
            <person name="Schaefer M."/>
            <person name="Mueller-Auer S."/>
            <person name="Gabel C."/>
            <person name="Fuchs M."/>
            <person name="Duesterhoeft A."/>
            <person name="Fritzc C."/>
            <person name="Holzer E."/>
            <person name="Moestl D."/>
            <person name="Hilbert H."/>
            <person name="Borzym K."/>
            <person name="Langer I."/>
            <person name="Beck A."/>
            <person name="Lehrach H."/>
            <person name="Reinhardt R."/>
            <person name="Pohl T.M."/>
            <person name="Eger P."/>
            <person name="Zimmermann W."/>
            <person name="Wedler H."/>
            <person name="Wambutt R."/>
            <person name="Purnelle B."/>
            <person name="Goffeau A."/>
            <person name="Cadieu E."/>
            <person name="Dreano S."/>
            <person name="Gloux S."/>
            <person name="Lelaure V."/>
            <person name="Mottier S."/>
            <person name="Galibert F."/>
            <person name="Aves S.J."/>
            <person name="Xiang Z."/>
            <person name="Hunt C."/>
            <person name="Moore K."/>
            <person name="Hurst S.M."/>
            <person name="Lucas M."/>
            <person name="Rochet M."/>
            <person name="Gaillardin C."/>
            <person name="Tallada V.A."/>
            <person name="Garzon A."/>
            <person name="Thode G."/>
            <person name="Daga R.R."/>
            <person name="Cruzado L."/>
            <person name="Jimenez J."/>
            <person name="Sanchez M."/>
            <person name="del Rey F."/>
            <person name="Benito J."/>
            <person name="Dominguez A."/>
            <person name="Revuelta J.L."/>
            <person name="Moreno S."/>
            <person name="Armstrong J."/>
            <person name="Forsburg S.L."/>
            <person name="Cerutti L."/>
            <person name="Lowe T."/>
            <person name="McCombie W.R."/>
            <person name="Paulsen I."/>
            <person name="Potashkin J."/>
            <person name="Shpakovski G.V."/>
            <person name="Ussery D."/>
            <person name="Barrell B.G."/>
            <person name="Nurse P."/>
        </authorList>
    </citation>
    <scope>NUCLEOTIDE SEQUENCE [LARGE SCALE GENOMIC DNA]</scope>
    <source>
        <strain>972 / ATCC 24843</strain>
    </source>
</reference>
<reference key="3">
    <citation type="journal article" date="1997" name="J. Cell Sci.">
        <title>Distinct subunit functions and cell cycle regulated phosphorylation of 20S APC/cyclosome required for anaphase in fission yeast.</title>
        <authorList>
            <person name="Yamada H."/>
            <person name="Kumada K."/>
            <person name="Yanagida M."/>
        </authorList>
    </citation>
    <scope>FUNCTION</scope>
    <scope>INTERACTION WITH NUC2</scope>
    <scope>PHOSPHORYLATION</scope>
</reference>
<reference key="4">
    <citation type="journal article" date="2002" name="Curr. Biol.">
        <title>Proteomics analysis identifies new components of the fission and budding yeast anaphase-promoting complexes.</title>
        <authorList>
            <person name="Yoon H.-J."/>
            <person name="Feoktistova A."/>
            <person name="Wolfe B.A."/>
            <person name="Jennings J.L."/>
            <person name="Link A.J."/>
            <person name="Gould K.L."/>
        </authorList>
    </citation>
    <scope>SUBUNIT</scope>
</reference>
<reference key="5">
    <citation type="journal article" date="2010" name="EMBO J.">
        <title>The APC/C subunit Cdc16/Cut9 is a contiguous tetratricopeptide repeat superhelix with a homo-dimer interface similar to Cdc27.</title>
        <authorList>
            <person name="Zhang Z."/>
            <person name="Kulkarni K."/>
            <person name="Hanrahan S.J."/>
            <person name="Thompson A.J."/>
            <person name="Barford D."/>
        </authorList>
    </citation>
    <scope>X-RAY CRYSTALLOGRAPHY (2.6 ANGSTROMS) OF 1-597 IN COMPLEX WITH HCN1</scope>
    <scope>TPR REPEATS</scope>
    <scope>SUBUNIT</scope>
</reference>
<feature type="chain" id="PRO_0000106281" description="Anaphase-promoting complex subunit cut9">
    <location>
        <begin position="1"/>
        <end position="671"/>
    </location>
</feature>
<feature type="repeat" description="TPR 1">
    <location>
        <begin position="83"/>
        <end position="114"/>
    </location>
</feature>
<feature type="repeat" description="TPR 2">
    <location>
        <begin position="117"/>
        <end position="142"/>
    </location>
</feature>
<feature type="repeat" description="TPR 3">
    <location>
        <begin position="150"/>
        <end position="173"/>
    </location>
</feature>
<feature type="repeat" description="TPR 4">
    <location>
        <begin position="198"/>
        <end position="229"/>
    </location>
</feature>
<feature type="repeat" description="TPR 5">
    <location>
        <begin position="234"/>
        <end position="257"/>
    </location>
</feature>
<feature type="repeat" description="TPR 6">
    <location>
        <begin position="268"/>
        <end position="296"/>
    </location>
</feature>
<feature type="repeat" description="TPR 7">
    <location>
        <begin position="306"/>
        <end position="334"/>
    </location>
</feature>
<feature type="repeat" description="TPR 8">
    <location>
        <begin position="341"/>
        <end position="368"/>
    </location>
</feature>
<feature type="repeat" description="TPR 9">
    <location>
        <begin position="373"/>
        <end position="402"/>
    </location>
</feature>
<feature type="repeat" description="TPR 10">
    <location>
        <begin position="407"/>
        <end position="435"/>
    </location>
</feature>
<feature type="repeat" description="TPR 11">
    <location>
        <begin position="442"/>
        <end position="470"/>
    </location>
</feature>
<feature type="repeat" description="TPR 12">
    <location>
        <begin position="475"/>
        <end position="507"/>
    </location>
</feature>
<feature type="repeat" description="TPR 13">
    <location>
        <begin position="513"/>
        <end position="545"/>
    </location>
</feature>
<feature type="repeat" description="TPR 14">
    <location>
        <begin position="550"/>
        <end position="579"/>
    </location>
</feature>
<feature type="region of interest" description="Disordered" evidence="1">
    <location>
        <begin position="1"/>
        <end position="24"/>
    </location>
</feature>
<feature type="region of interest" description="Disordered" evidence="1">
    <location>
        <begin position="622"/>
        <end position="643"/>
    </location>
</feature>
<feature type="mutagenesis site" description="In cut9-T98; temperature-sensitive." evidence="4">
    <original>G</original>
    <variation>D</variation>
    <location>
        <position position="412"/>
    </location>
</feature>
<feature type="mutagenesis site" description="In cut9-665; temperature-sensitive." evidence="4">
    <original>A</original>
    <variation>T</variation>
    <location>
        <position position="535"/>
    </location>
</feature>
<feature type="sequence conflict" description="In Ref. 1." evidence="6" ref="1">
    <original>A</original>
    <variation>C</variation>
    <location>
        <position position="103"/>
    </location>
</feature>
<feature type="helix" evidence="7">
    <location>
        <begin position="50"/>
        <end position="53"/>
    </location>
</feature>
<feature type="helix" evidence="7">
    <location>
        <begin position="55"/>
        <end position="59"/>
    </location>
</feature>
<feature type="helix" evidence="7">
    <location>
        <begin position="83"/>
        <end position="96"/>
    </location>
</feature>
<feature type="helix" evidence="7">
    <location>
        <begin position="100"/>
        <end position="114"/>
    </location>
</feature>
<feature type="helix" evidence="7">
    <location>
        <begin position="117"/>
        <end position="129"/>
    </location>
</feature>
<feature type="helix" evidence="7">
    <location>
        <begin position="133"/>
        <end position="142"/>
    </location>
</feature>
<feature type="helix" evidence="7">
    <location>
        <begin position="145"/>
        <end position="147"/>
    </location>
</feature>
<feature type="helix" evidence="7">
    <location>
        <begin position="150"/>
        <end position="162"/>
    </location>
</feature>
<feature type="helix" evidence="7">
    <location>
        <begin position="166"/>
        <end position="173"/>
    </location>
</feature>
<feature type="helix" evidence="7">
    <location>
        <begin position="198"/>
        <end position="212"/>
    </location>
</feature>
<feature type="helix" evidence="7">
    <location>
        <begin position="216"/>
        <end position="229"/>
    </location>
</feature>
<feature type="helix" evidence="7">
    <location>
        <begin position="234"/>
        <end position="242"/>
    </location>
</feature>
<feature type="helix" evidence="7">
    <location>
        <begin position="248"/>
        <end position="257"/>
    </location>
</feature>
<feature type="helix" evidence="7">
    <location>
        <begin position="261"/>
        <end position="264"/>
    </location>
</feature>
<feature type="helix" evidence="7">
    <location>
        <begin position="265"/>
        <end position="267"/>
    </location>
</feature>
<feature type="helix" evidence="7">
    <location>
        <begin position="268"/>
        <end position="276"/>
    </location>
</feature>
<feature type="turn" evidence="7">
    <location>
        <begin position="281"/>
        <end position="284"/>
    </location>
</feature>
<feature type="helix" evidence="7">
    <location>
        <begin position="285"/>
        <end position="296"/>
    </location>
</feature>
<feature type="helix" evidence="7">
    <location>
        <begin position="301"/>
        <end position="303"/>
    </location>
</feature>
<feature type="helix" evidence="7">
    <location>
        <begin position="305"/>
        <end position="317"/>
    </location>
</feature>
<feature type="helix" evidence="7">
    <location>
        <begin position="321"/>
        <end position="334"/>
    </location>
</feature>
<feature type="helix" evidence="7">
    <location>
        <begin position="342"/>
        <end position="352"/>
    </location>
</feature>
<feature type="helix" evidence="7">
    <location>
        <begin position="355"/>
        <end position="368"/>
    </location>
</feature>
<feature type="helix" evidence="7">
    <location>
        <begin position="373"/>
        <end position="385"/>
    </location>
</feature>
<feature type="helix" evidence="7">
    <location>
        <begin position="389"/>
        <end position="402"/>
    </location>
</feature>
<feature type="helix" evidence="7">
    <location>
        <begin position="407"/>
        <end position="420"/>
    </location>
</feature>
<feature type="helix" evidence="7">
    <location>
        <begin position="423"/>
        <end position="435"/>
    </location>
</feature>
<feature type="turn" evidence="7">
    <location>
        <begin position="436"/>
        <end position="439"/>
    </location>
</feature>
<feature type="helix" evidence="7">
    <location>
        <begin position="442"/>
        <end position="454"/>
    </location>
</feature>
<feature type="helix" evidence="7">
    <location>
        <begin position="457"/>
        <end position="470"/>
    </location>
</feature>
<feature type="helix" evidence="7">
    <location>
        <begin position="475"/>
        <end position="487"/>
    </location>
</feature>
<feature type="helix" evidence="7">
    <location>
        <begin position="491"/>
        <end position="507"/>
    </location>
</feature>
<feature type="helix" evidence="7">
    <location>
        <begin position="513"/>
        <end position="515"/>
    </location>
</feature>
<feature type="helix" evidence="7">
    <location>
        <begin position="516"/>
        <end position="528"/>
    </location>
</feature>
<feature type="helix" evidence="7">
    <location>
        <begin position="532"/>
        <end position="545"/>
    </location>
</feature>
<feature type="helix" evidence="7">
    <location>
        <begin position="550"/>
        <end position="562"/>
    </location>
</feature>
<feature type="helix" evidence="7">
    <location>
        <begin position="566"/>
        <end position="579"/>
    </location>
</feature>
<feature type="helix" evidence="7">
    <location>
        <begin position="584"/>
        <end position="592"/>
    </location>
</feature>
<sequence>MVVKRTQTDSRMQSTPGNHNHPDAHANAAYMTPPSMGALNANNSNSQLSTLTISPMTYLANNTSTDGSFLKERNAQNTDSLSREDYLRLWRHDALMQQQYKCAAFVGEKVLDITGNPNDAFWLAQVYCCTGDYARAKCLLTKEDLYNRSSACRYLAAFCLVKLYDWQGALNLLGETNPFRKDEKNANKLLMQDGGIKLEASMCYLRGQVYTNLSNFDRAKECYKEALMVDAKCYEAFDQLVSNHLLTADEEWDLVLKLNYSTYSKEDAAFLRSLYMLKLNKTSHEDELRRAEDYLSSINGLEKSSDLLLCKADTLFVRSRFIDVLAITTKILEIDPYNLDVYPLHLASLHESGEKNKLYLISNDLVDRHPEKAVTWLAVGIYYLCVNKISEARRYFSKSSTMDPQFGPAWIGFAHSFAIEGEHDQAISAYTTAARLFQGTHLPYLFLGMQHMQLGNILLANEYLQSSYALFQYDPLLLNELGVVAFNKSDMQTAINHFQNALLLVKKTQSNEKPWAATWANLGHAYRKLKMYDAAIDALNQGLLLSTNDANVHTAIALVYLHKKIPGLAITHLHESLAISPNEIMASDLLKRALEENSLTSGFLNSKYVFEDEVSEYMQQSNLNTSDKSMSMEDQSGKVTESVNDRTQVLYADSRSEMMMDDIEGNVSEQR</sequence>
<keyword id="KW-0002">3D-structure</keyword>
<keyword id="KW-0131">Cell cycle</keyword>
<keyword id="KW-0132">Cell division</keyword>
<keyword id="KW-0498">Mitosis</keyword>
<keyword id="KW-0539">Nucleus</keyword>
<keyword id="KW-0597">Phosphoprotein</keyword>
<keyword id="KW-1185">Reference proteome</keyword>
<keyword id="KW-0677">Repeat</keyword>
<keyword id="KW-0802">TPR repeat</keyword>
<keyword id="KW-0833">Ubl conjugation pathway</keyword>
<proteinExistence type="evidence at protein level"/>
<name>CUT9_SCHPO</name>